<feature type="chain" id="PRO_0000434846" description="Protein TIFY 9">
    <location>
        <begin position="1"/>
        <end position="188"/>
    </location>
</feature>
<feature type="domain" description="Tify" evidence="3">
    <location>
        <begin position="80"/>
        <end position="114"/>
    </location>
</feature>
<feature type="region of interest" description="Disordered" evidence="4">
    <location>
        <begin position="20"/>
        <end position="41"/>
    </location>
</feature>
<feature type="region of interest" description="Disordered" evidence="4">
    <location>
        <begin position="156"/>
        <end position="188"/>
    </location>
</feature>
<feature type="short sequence motif" description="Jas" evidence="2">
    <location>
        <begin position="135"/>
        <end position="160"/>
    </location>
</feature>
<feature type="compositionally biased region" description="Low complexity" evidence="4">
    <location>
        <begin position="28"/>
        <end position="38"/>
    </location>
</feature>
<feature type="compositionally biased region" description="Basic and acidic residues" evidence="4">
    <location>
        <begin position="179"/>
        <end position="188"/>
    </location>
</feature>
<gene>
    <name evidence="7" type="primary">TIFY9</name>
    <name evidence="7" type="synonym">JAZ5</name>
    <name evidence="10" type="ordered locus">Os04g0395800</name>
    <name evidence="12" type="ORF">OsJ_14628</name>
    <name evidence="11" type="ORF">OSJNBb0039F02.2</name>
</gene>
<protein>
    <recommendedName>
        <fullName evidence="9">Protein TIFY 9</fullName>
        <shortName evidence="7">OsTIFY9</shortName>
    </recommendedName>
    <alternativeName>
        <fullName evidence="9">Jasmonate ZIM domain-containing protein 5</fullName>
        <shortName evidence="7">OsJAZ5</shortName>
    </alternativeName>
    <alternativeName>
        <fullName evidence="8">OsJAZ11</fullName>
    </alternativeName>
</protein>
<proteinExistence type="evidence at protein level"/>
<name>TIF9_ORYSJ</name>
<keyword id="KW-1184">Jasmonic acid signaling pathway</keyword>
<keyword id="KW-1185">Reference proteome</keyword>
<keyword id="KW-0804">Transcription</keyword>
<keyword id="KW-0805">Transcription regulation</keyword>
<keyword id="KW-0832">Ubl conjugation</keyword>
<reference key="1">
    <citation type="journal article" date="2002" name="Nature">
        <title>Sequence and analysis of rice chromosome 4.</title>
        <authorList>
            <person name="Feng Q."/>
            <person name="Zhang Y."/>
            <person name="Hao P."/>
            <person name="Wang S."/>
            <person name="Fu G."/>
            <person name="Huang Y."/>
            <person name="Li Y."/>
            <person name="Zhu J."/>
            <person name="Liu Y."/>
            <person name="Hu X."/>
            <person name="Jia P."/>
            <person name="Zhang Y."/>
            <person name="Zhao Q."/>
            <person name="Ying K."/>
            <person name="Yu S."/>
            <person name="Tang Y."/>
            <person name="Weng Q."/>
            <person name="Zhang L."/>
            <person name="Lu Y."/>
            <person name="Mu J."/>
            <person name="Lu Y."/>
            <person name="Zhang L.S."/>
            <person name="Yu Z."/>
            <person name="Fan D."/>
            <person name="Liu X."/>
            <person name="Lu T."/>
            <person name="Li C."/>
            <person name="Wu Y."/>
            <person name="Sun T."/>
            <person name="Lei H."/>
            <person name="Li T."/>
            <person name="Hu H."/>
            <person name="Guan J."/>
            <person name="Wu M."/>
            <person name="Zhang R."/>
            <person name="Zhou B."/>
            <person name="Chen Z."/>
            <person name="Chen L."/>
            <person name="Jin Z."/>
            <person name="Wang R."/>
            <person name="Yin H."/>
            <person name="Cai Z."/>
            <person name="Ren S."/>
            <person name="Lv G."/>
            <person name="Gu W."/>
            <person name="Zhu G."/>
            <person name="Tu Y."/>
            <person name="Jia J."/>
            <person name="Zhang Y."/>
            <person name="Chen J."/>
            <person name="Kang H."/>
            <person name="Chen X."/>
            <person name="Shao C."/>
            <person name="Sun Y."/>
            <person name="Hu Q."/>
            <person name="Zhang X."/>
            <person name="Zhang W."/>
            <person name="Wang L."/>
            <person name="Ding C."/>
            <person name="Sheng H."/>
            <person name="Gu J."/>
            <person name="Chen S."/>
            <person name="Ni L."/>
            <person name="Zhu F."/>
            <person name="Chen W."/>
            <person name="Lan L."/>
            <person name="Lai Y."/>
            <person name="Cheng Z."/>
            <person name="Gu M."/>
            <person name="Jiang J."/>
            <person name="Li J."/>
            <person name="Hong G."/>
            <person name="Xue Y."/>
            <person name="Han B."/>
        </authorList>
    </citation>
    <scope>NUCLEOTIDE SEQUENCE [LARGE SCALE GENOMIC DNA]</scope>
    <source>
        <strain>cv. Nipponbare</strain>
    </source>
</reference>
<reference key="2">
    <citation type="journal article" date="2005" name="Nature">
        <title>The map-based sequence of the rice genome.</title>
        <authorList>
            <consortium name="International rice genome sequencing project (IRGSP)"/>
        </authorList>
    </citation>
    <scope>NUCLEOTIDE SEQUENCE [LARGE SCALE GENOMIC DNA]</scope>
    <source>
        <strain>cv. Nipponbare</strain>
    </source>
</reference>
<reference key="3">
    <citation type="journal article" date="2008" name="Nucleic Acids Res.">
        <title>The rice annotation project database (RAP-DB): 2008 update.</title>
        <authorList>
            <consortium name="The rice annotation project (RAP)"/>
        </authorList>
    </citation>
    <scope>GENOME REANNOTATION</scope>
    <source>
        <strain>cv. Nipponbare</strain>
    </source>
</reference>
<reference key="4">
    <citation type="journal article" date="2013" name="Rice">
        <title>Improvement of the Oryza sativa Nipponbare reference genome using next generation sequence and optical map data.</title>
        <authorList>
            <person name="Kawahara Y."/>
            <person name="de la Bastide M."/>
            <person name="Hamilton J.P."/>
            <person name="Kanamori H."/>
            <person name="McCombie W.R."/>
            <person name="Ouyang S."/>
            <person name="Schwartz D.C."/>
            <person name="Tanaka T."/>
            <person name="Wu J."/>
            <person name="Zhou S."/>
            <person name="Childs K.L."/>
            <person name="Davidson R.M."/>
            <person name="Lin H."/>
            <person name="Quesada-Ocampo L."/>
            <person name="Vaillancourt B."/>
            <person name="Sakai H."/>
            <person name="Lee S.S."/>
            <person name="Kim J."/>
            <person name="Numa H."/>
            <person name="Itoh T."/>
            <person name="Buell C.R."/>
            <person name="Matsumoto T."/>
        </authorList>
    </citation>
    <scope>GENOME REANNOTATION</scope>
    <source>
        <strain>cv. Nipponbare</strain>
    </source>
</reference>
<reference key="5">
    <citation type="journal article" date="2005" name="PLoS Biol.">
        <title>The genomes of Oryza sativa: a history of duplications.</title>
        <authorList>
            <person name="Yu J."/>
            <person name="Wang J."/>
            <person name="Lin W."/>
            <person name="Li S."/>
            <person name="Li H."/>
            <person name="Zhou J."/>
            <person name="Ni P."/>
            <person name="Dong W."/>
            <person name="Hu S."/>
            <person name="Zeng C."/>
            <person name="Zhang J."/>
            <person name="Zhang Y."/>
            <person name="Li R."/>
            <person name="Xu Z."/>
            <person name="Li S."/>
            <person name="Li X."/>
            <person name="Zheng H."/>
            <person name="Cong L."/>
            <person name="Lin L."/>
            <person name="Yin J."/>
            <person name="Geng J."/>
            <person name="Li G."/>
            <person name="Shi J."/>
            <person name="Liu J."/>
            <person name="Lv H."/>
            <person name="Li J."/>
            <person name="Wang J."/>
            <person name="Deng Y."/>
            <person name="Ran L."/>
            <person name="Shi X."/>
            <person name="Wang X."/>
            <person name="Wu Q."/>
            <person name="Li C."/>
            <person name="Ren X."/>
            <person name="Wang J."/>
            <person name="Wang X."/>
            <person name="Li D."/>
            <person name="Liu D."/>
            <person name="Zhang X."/>
            <person name="Ji Z."/>
            <person name="Zhao W."/>
            <person name="Sun Y."/>
            <person name="Zhang Z."/>
            <person name="Bao J."/>
            <person name="Han Y."/>
            <person name="Dong L."/>
            <person name="Ji J."/>
            <person name="Chen P."/>
            <person name="Wu S."/>
            <person name="Liu J."/>
            <person name="Xiao Y."/>
            <person name="Bu D."/>
            <person name="Tan J."/>
            <person name="Yang L."/>
            <person name="Ye C."/>
            <person name="Zhang J."/>
            <person name="Xu J."/>
            <person name="Zhou Y."/>
            <person name="Yu Y."/>
            <person name="Zhang B."/>
            <person name="Zhuang S."/>
            <person name="Wei H."/>
            <person name="Liu B."/>
            <person name="Lei M."/>
            <person name="Yu H."/>
            <person name="Li Y."/>
            <person name="Xu H."/>
            <person name="Wei S."/>
            <person name="He X."/>
            <person name="Fang L."/>
            <person name="Zhang Z."/>
            <person name="Zhang Y."/>
            <person name="Huang X."/>
            <person name="Su Z."/>
            <person name="Tong W."/>
            <person name="Li J."/>
            <person name="Tong Z."/>
            <person name="Li S."/>
            <person name="Ye J."/>
            <person name="Wang L."/>
            <person name="Fang L."/>
            <person name="Lei T."/>
            <person name="Chen C.-S."/>
            <person name="Chen H.-C."/>
            <person name="Xu Z."/>
            <person name="Li H."/>
            <person name="Huang H."/>
            <person name="Zhang F."/>
            <person name="Xu H."/>
            <person name="Li N."/>
            <person name="Zhao C."/>
            <person name="Li S."/>
            <person name="Dong L."/>
            <person name="Huang Y."/>
            <person name="Li L."/>
            <person name="Xi Y."/>
            <person name="Qi Q."/>
            <person name="Li W."/>
            <person name="Zhang B."/>
            <person name="Hu W."/>
            <person name="Zhang Y."/>
            <person name="Tian X."/>
            <person name="Jiao Y."/>
            <person name="Liang X."/>
            <person name="Jin J."/>
            <person name="Gao L."/>
            <person name="Zheng W."/>
            <person name="Hao B."/>
            <person name="Liu S.-M."/>
            <person name="Wang W."/>
            <person name="Yuan L."/>
            <person name="Cao M."/>
            <person name="McDermott J."/>
            <person name="Samudrala R."/>
            <person name="Wang J."/>
            <person name="Wong G.K.-S."/>
            <person name="Yang H."/>
        </authorList>
    </citation>
    <scope>NUCLEOTIDE SEQUENCE [LARGE SCALE GENOMIC DNA]</scope>
    <source>
        <strain>cv. Nipponbare</strain>
    </source>
</reference>
<reference key="6">
    <citation type="journal article" date="2003" name="Science">
        <title>Collection, mapping, and annotation of over 28,000 cDNA clones from japonica rice.</title>
        <authorList>
            <consortium name="The rice full-length cDNA consortium"/>
        </authorList>
    </citation>
    <scope>NUCLEOTIDE SEQUENCE [LARGE SCALE MRNA]</scope>
    <source>
        <strain>cv. Nipponbare</strain>
    </source>
</reference>
<reference key="7">
    <citation type="journal article" date="2009" name="Plant Mol. Biol.">
        <title>Identification and expression profiling analysis of TIFY family genes involved in stress and phytohormone responses in rice.</title>
        <authorList>
            <person name="Ye H."/>
            <person name="Du H."/>
            <person name="Tang N."/>
            <person name="Li X."/>
            <person name="Xiong L."/>
        </authorList>
    </citation>
    <scope>GENE FAMILY</scope>
    <scope>NOMENCLATURE</scope>
    <scope>INDUCTION</scope>
</reference>
<reference key="8">
    <citation type="journal article" date="2013" name="PLoS ONE">
        <title>Oryza sativa COI homologues restore jasmonate signal transduction in Arabidopsis coi1-1 mutants.</title>
        <authorList>
            <person name="Lee H.Y."/>
            <person name="Seo J.S."/>
            <person name="Cho J.H."/>
            <person name="Jung H."/>
            <person name="Kim J.K."/>
            <person name="Lee J.S."/>
            <person name="Rhee S."/>
            <person name="Do Choi Y."/>
        </authorList>
    </citation>
    <scope>INTERACTION WITH COI1A AND COI2</scope>
</reference>
<accession>Q7XV97</accession>
<accession>A0A0P0WA24</accession>
<comment type="function">
    <text evidence="1">Repressor of jasmonate responses.</text>
</comment>
<comment type="subunit">
    <text evidence="6">Interacts with COI1A and COI2 in a coronatine-dependent manner. Coronatine is an analog of jasmonoyl isoleucine (JA-Ile).</text>
</comment>
<comment type="induction">
    <text evidence="5">By jasmonate, wounding, and cold, drought and salt stresses. Down-regulated by abscisic acid (ABA).</text>
</comment>
<comment type="domain">
    <text evidence="1">The jas domain (135-160) is required for interaction with COI1.</text>
</comment>
<comment type="PTM">
    <text evidence="1">Ubiquitinated. Targeted for degradation by the SCF(COI1) E3 ubiquitin ligase-proteasome pathway during jasmonate signaling.</text>
</comment>
<comment type="similarity">
    <text evidence="9">Belongs to the TIFY/JAZ family.</text>
</comment>
<evidence type="ECO:0000250" key="1">
    <source>
        <dbReference type="UniProtKB" id="Q7XPM8"/>
    </source>
</evidence>
<evidence type="ECO:0000255" key="2"/>
<evidence type="ECO:0000255" key="3">
    <source>
        <dbReference type="PROSITE-ProRule" id="PRU00650"/>
    </source>
</evidence>
<evidence type="ECO:0000256" key="4">
    <source>
        <dbReference type="SAM" id="MobiDB-lite"/>
    </source>
</evidence>
<evidence type="ECO:0000269" key="5">
    <source>
    </source>
</evidence>
<evidence type="ECO:0000269" key="6">
    <source>
    </source>
</evidence>
<evidence type="ECO:0000303" key="7">
    <source>
    </source>
</evidence>
<evidence type="ECO:0000303" key="8">
    <source>
    </source>
</evidence>
<evidence type="ECO:0000305" key="9"/>
<evidence type="ECO:0000312" key="10">
    <source>
        <dbReference type="EMBL" id="BAF14575.1"/>
    </source>
</evidence>
<evidence type="ECO:0000312" key="11">
    <source>
        <dbReference type="EMBL" id="CAD40771.1"/>
    </source>
</evidence>
<evidence type="ECO:0000312" key="12">
    <source>
        <dbReference type="EMBL" id="EAZ30578.1"/>
    </source>
</evidence>
<sequence>MSTRAPVELDFLGLRAAAADADDRHAKSGGSSASSSSSIRGMETSAIARIGPHLLRRVIAAAGPPPPPSTAPVPEEMPGAAAAAAPMTLFYNGSVAVFDVSHDKAEAIMRMATEATKAKGLARGNAIVGNFAKEPLTRTKSLQRFLSKRKERLTSLGPYQVGGPAAVGATTSTTTKSFLAKEEEHTAS</sequence>
<organism>
    <name type="scientific">Oryza sativa subsp. japonica</name>
    <name type="common">Rice</name>
    <dbReference type="NCBI Taxonomy" id="39947"/>
    <lineage>
        <taxon>Eukaryota</taxon>
        <taxon>Viridiplantae</taxon>
        <taxon>Streptophyta</taxon>
        <taxon>Embryophyta</taxon>
        <taxon>Tracheophyta</taxon>
        <taxon>Spermatophyta</taxon>
        <taxon>Magnoliopsida</taxon>
        <taxon>Liliopsida</taxon>
        <taxon>Poales</taxon>
        <taxon>Poaceae</taxon>
        <taxon>BOP clade</taxon>
        <taxon>Oryzoideae</taxon>
        <taxon>Oryzeae</taxon>
        <taxon>Oryzinae</taxon>
        <taxon>Oryza</taxon>
        <taxon>Oryza sativa</taxon>
    </lineage>
</organism>
<dbReference type="EMBL" id="AL662997">
    <property type="protein sequence ID" value="CAD40771.1"/>
    <property type="molecule type" value="Genomic_DNA"/>
</dbReference>
<dbReference type="EMBL" id="AP008210">
    <property type="protein sequence ID" value="BAF14575.1"/>
    <property type="molecule type" value="Genomic_DNA"/>
</dbReference>
<dbReference type="EMBL" id="AP014960">
    <property type="protein sequence ID" value="BAS89003.1"/>
    <property type="molecule type" value="Genomic_DNA"/>
</dbReference>
<dbReference type="EMBL" id="CM000141">
    <property type="protein sequence ID" value="EAZ30578.1"/>
    <property type="molecule type" value="Genomic_DNA"/>
</dbReference>
<dbReference type="EMBL" id="AK107750">
    <property type="protein sequence ID" value="BAG98147.1"/>
    <property type="molecule type" value="mRNA"/>
</dbReference>
<dbReference type="RefSeq" id="XP_015634258.1">
    <property type="nucleotide sequence ID" value="XM_015778772.1"/>
</dbReference>
<dbReference type="SMR" id="Q7XV97"/>
<dbReference type="STRING" id="39947.Q7XV97"/>
<dbReference type="PaxDb" id="39947-Q7XV97"/>
<dbReference type="EnsemblPlants" id="Os04t0395800-01">
    <property type="protein sequence ID" value="Os04t0395800-01"/>
    <property type="gene ID" value="Os04g0395800"/>
</dbReference>
<dbReference type="Gramene" id="Os04t0395800-01">
    <property type="protein sequence ID" value="Os04t0395800-01"/>
    <property type="gene ID" value="Os04g0395800"/>
</dbReference>
<dbReference type="KEGG" id="dosa:Os04g0395800"/>
<dbReference type="eggNOG" id="ENOG502RZEQ">
    <property type="taxonomic scope" value="Eukaryota"/>
</dbReference>
<dbReference type="HOGENOM" id="CLU_124666_0_0_1"/>
<dbReference type="InParanoid" id="Q7XV97"/>
<dbReference type="OMA" id="FKMEMES"/>
<dbReference type="OrthoDB" id="1914366at2759"/>
<dbReference type="PlantReactome" id="R-OSA-6787011">
    <property type="pathway name" value="Jasmonic acid signaling"/>
</dbReference>
<dbReference type="Proteomes" id="UP000000763">
    <property type="component" value="Chromosome 4"/>
</dbReference>
<dbReference type="Proteomes" id="UP000007752">
    <property type="component" value="Chromosome 4"/>
</dbReference>
<dbReference type="Proteomes" id="UP000059680">
    <property type="component" value="Chromosome 4"/>
</dbReference>
<dbReference type="GO" id="GO:0005634">
    <property type="term" value="C:nucleus"/>
    <property type="evidence" value="ECO:0000318"/>
    <property type="project" value="GO_Central"/>
</dbReference>
<dbReference type="GO" id="GO:0031347">
    <property type="term" value="P:regulation of defense response"/>
    <property type="evidence" value="ECO:0000318"/>
    <property type="project" value="GO_Central"/>
</dbReference>
<dbReference type="GO" id="GO:2000022">
    <property type="term" value="P:regulation of jasmonic acid mediated signaling pathway"/>
    <property type="evidence" value="ECO:0000318"/>
    <property type="project" value="GO_Central"/>
</dbReference>
<dbReference type="GO" id="GO:0009611">
    <property type="term" value="P:response to wounding"/>
    <property type="evidence" value="ECO:0000318"/>
    <property type="project" value="GO_Central"/>
</dbReference>
<dbReference type="InterPro" id="IPR018467">
    <property type="entry name" value="CCT_CS"/>
</dbReference>
<dbReference type="InterPro" id="IPR040390">
    <property type="entry name" value="TIFY/JAZ"/>
</dbReference>
<dbReference type="InterPro" id="IPR010399">
    <property type="entry name" value="Tify_dom"/>
</dbReference>
<dbReference type="PANTHER" id="PTHR33077">
    <property type="entry name" value="PROTEIN TIFY 4A-RELATED-RELATED"/>
    <property type="match status" value="1"/>
</dbReference>
<dbReference type="PANTHER" id="PTHR33077:SF5">
    <property type="entry name" value="PROTEIN TIFY 9"/>
    <property type="match status" value="1"/>
</dbReference>
<dbReference type="Pfam" id="PF09425">
    <property type="entry name" value="Jas_motif"/>
    <property type="match status" value="1"/>
</dbReference>
<dbReference type="Pfam" id="PF06200">
    <property type="entry name" value="tify"/>
    <property type="match status" value="1"/>
</dbReference>
<dbReference type="SMART" id="SM00979">
    <property type="entry name" value="TIFY"/>
    <property type="match status" value="1"/>
</dbReference>
<dbReference type="PROSITE" id="PS51320">
    <property type="entry name" value="TIFY"/>
    <property type="match status" value="1"/>
</dbReference>